<sequence>MNNVLSTNIAGKEMKVEFGKIGMLSNAATFMSYGDTVILTNVNASSEPRVGIDFFPLSVEYEERLYAVGKIPGGFIKREGRPSEKAILNGRAVDRTLRPLFPKGYRNDVQVVCTVVSVEKDNLPEILAINAASMALCLSSIPFAMPVAAVQVGLIDNNFIVNPNATEREESTLHLTVCATKERVMMIEAGGNEIPEDIMIAAIKFGFDECQNIINFQEEAVKKFGKEKDIPTLFTVDEEVEKDIKEFASDMIKEAMYITDKDERNAAIDAVNQKVKEEFGEKYEDKFGDIKEVLYNMQKKVVRHMLLKDKRRPDGRAFDQVRPLGCEVGLLPRTHGTGLFTRGLTQVMTVATLGAVGDIQILDGIDEAQSKRYMHHYNFPGYSVGEVKPLRGPGRREIGHGALAERALEPLIPSEEEFPYTIRLVSEVLSSNGSTSQASVCGSTLALLDAGVPLKRPAAGIAMGLITSEDLSEEQVLTDIQGIEDFFGDMDFKVAGTTEGITSIQVDTKLKGFSFNVVENAIRDARKARMTILEKINECISSPREDVSLYAPKTETIQIDPDKIRSVIGAGGKVINKIIQDTGVKIDIKEDGSVFVSSSDHEGVKEAIKIIEGLTKDVKAGEIYLGKVTKITTFGAFVEILPNKEGLVHISKLDKERVNKVEDVVSVGDEILVKVTEIDSQGRINLSRKDVLLDQENKENKEEK</sequence>
<reference key="1">
    <citation type="submission" date="2008-05" db="EMBL/GenBank/DDBJ databases">
        <title>Complete genome sequence of Clostridium botulinum E3 str. Alaska E43.</title>
        <authorList>
            <person name="Brinkac L.M."/>
            <person name="Brown J.L."/>
            <person name="Bruce D."/>
            <person name="Detter C."/>
            <person name="Munk C."/>
            <person name="Smith L.A."/>
            <person name="Smith T.J."/>
            <person name="Sutton G."/>
            <person name="Brettin T.S."/>
        </authorList>
    </citation>
    <scope>NUCLEOTIDE SEQUENCE [LARGE SCALE GENOMIC DNA]</scope>
    <source>
        <strain>Alaska E43 / Type E3</strain>
    </source>
</reference>
<evidence type="ECO:0000255" key="1">
    <source>
        <dbReference type="HAMAP-Rule" id="MF_01595"/>
    </source>
</evidence>
<name>PNP_CLOBA</name>
<organism>
    <name type="scientific">Clostridium botulinum (strain Alaska E43 / Type E3)</name>
    <dbReference type="NCBI Taxonomy" id="508767"/>
    <lineage>
        <taxon>Bacteria</taxon>
        <taxon>Bacillati</taxon>
        <taxon>Bacillota</taxon>
        <taxon>Clostridia</taxon>
        <taxon>Eubacteriales</taxon>
        <taxon>Clostridiaceae</taxon>
        <taxon>Clostridium</taxon>
    </lineage>
</organism>
<proteinExistence type="inferred from homology"/>
<comment type="function">
    <text evidence="1">Involved in mRNA degradation. Catalyzes the phosphorolysis of single-stranded polyribonucleotides processively in the 3'- to 5'-direction.</text>
</comment>
<comment type="catalytic activity">
    <reaction evidence="1">
        <text>RNA(n+1) + phosphate = RNA(n) + a ribonucleoside 5'-diphosphate</text>
        <dbReference type="Rhea" id="RHEA:22096"/>
        <dbReference type="Rhea" id="RHEA-COMP:14527"/>
        <dbReference type="Rhea" id="RHEA-COMP:17342"/>
        <dbReference type="ChEBI" id="CHEBI:43474"/>
        <dbReference type="ChEBI" id="CHEBI:57930"/>
        <dbReference type="ChEBI" id="CHEBI:140395"/>
        <dbReference type="EC" id="2.7.7.8"/>
    </reaction>
</comment>
<comment type="cofactor">
    <cofactor evidence="1">
        <name>Mg(2+)</name>
        <dbReference type="ChEBI" id="CHEBI:18420"/>
    </cofactor>
</comment>
<comment type="subcellular location">
    <subcellularLocation>
        <location evidence="1">Cytoplasm</location>
    </subcellularLocation>
</comment>
<comment type="similarity">
    <text evidence="1">Belongs to the polyribonucleotide nucleotidyltransferase family.</text>
</comment>
<keyword id="KW-0963">Cytoplasm</keyword>
<keyword id="KW-0460">Magnesium</keyword>
<keyword id="KW-0479">Metal-binding</keyword>
<keyword id="KW-0548">Nucleotidyltransferase</keyword>
<keyword id="KW-0694">RNA-binding</keyword>
<keyword id="KW-0808">Transferase</keyword>
<gene>
    <name evidence="1" type="primary">pnp</name>
    <name type="ordered locus">CLH_1230</name>
</gene>
<dbReference type="EC" id="2.7.7.8" evidence="1"/>
<dbReference type="EMBL" id="CP001078">
    <property type="protein sequence ID" value="ACD52528.1"/>
    <property type="molecule type" value="Genomic_DNA"/>
</dbReference>
<dbReference type="RefSeq" id="WP_003374359.1">
    <property type="nucleotide sequence ID" value="NC_010723.1"/>
</dbReference>
<dbReference type="SMR" id="B2V4H5"/>
<dbReference type="KEGG" id="cbt:CLH_1230"/>
<dbReference type="HOGENOM" id="CLU_004217_2_2_9"/>
<dbReference type="GO" id="GO:0005829">
    <property type="term" value="C:cytosol"/>
    <property type="evidence" value="ECO:0007669"/>
    <property type="project" value="TreeGrafter"/>
</dbReference>
<dbReference type="GO" id="GO:0000175">
    <property type="term" value="F:3'-5'-RNA exonuclease activity"/>
    <property type="evidence" value="ECO:0007669"/>
    <property type="project" value="TreeGrafter"/>
</dbReference>
<dbReference type="GO" id="GO:0000287">
    <property type="term" value="F:magnesium ion binding"/>
    <property type="evidence" value="ECO:0007669"/>
    <property type="project" value="UniProtKB-UniRule"/>
</dbReference>
<dbReference type="GO" id="GO:0004654">
    <property type="term" value="F:polyribonucleotide nucleotidyltransferase activity"/>
    <property type="evidence" value="ECO:0007669"/>
    <property type="project" value="UniProtKB-UniRule"/>
</dbReference>
<dbReference type="GO" id="GO:0003723">
    <property type="term" value="F:RNA binding"/>
    <property type="evidence" value="ECO:0007669"/>
    <property type="project" value="UniProtKB-UniRule"/>
</dbReference>
<dbReference type="GO" id="GO:0006402">
    <property type="term" value="P:mRNA catabolic process"/>
    <property type="evidence" value="ECO:0007669"/>
    <property type="project" value="UniProtKB-UniRule"/>
</dbReference>
<dbReference type="GO" id="GO:0006396">
    <property type="term" value="P:RNA processing"/>
    <property type="evidence" value="ECO:0007669"/>
    <property type="project" value="InterPro"/>
</dbReference>
<dbReference type="CDD" id="cd02393">
    <property type="entry name" value="KH-I_PNPase"/>
    <property type="match status" value="1"/>
</dbReference>
<dbReference type="CDD" id="cd11363">
    <property type="entry name" value="RNase_PH_PNPase_1"/>
    <property type="match status" value="1"/>
</dbReference>
<dbReference type="CDD" id="cd11364">
    <property type="entry name" value="RNase_PH_PNPase_2"/>
    <property type="match status" value="1"/>
</dbReference>
<dbReference type="CDD" id="cd04472">
    <property type="entry name" value="S1_PNPase"/>
    <property type="match status" value="1"/>
</dbReference>
<dbReference type="FunFam" id="2.40.50.140:FF:000023">
    <property type="entry name" value="Polyribonucleotide nucleotidyltransferase"/>
    <property type="match status" value="1"/>
</dbReference>
<dbReference type="FunFam" id="3.30.1370.10:FF:000001">
    <property type="entry name" value="Polyribonucleotide nucleotidyltransferase"/>
    <property type="match status" value="1"/>
</dbReference>
<dbReference type="FunFam" id="3.30.230.70:FF:000001">
    <property type="entry name" value="Polyribonucleotide nucleotidyltransferase"/>
    <property type="match status" value="1"/>
</dbReference>
<dbReference type="FunFam" id="3.30.230.70:FF:000002">
    <property type="entry name" value="Polyribonucleotide nucleotidyltransferase"/>
    <property type="match status" value="1"/>
</dbReference>
<dbReference type="Gene3D" id="3.30.230.70">
    <property type="entry name" value="GHMP Kinase, N-terminal domain"/>
    <property type="match status" value="2"/>
</dbReference>
<dbReference type="Gene3D" id="3.30.1370.10">
    <property type="entry name" value="K Homology domain, type 1"/>
    <property type="match status" value="1"/>
</dbReference>
<dbReference type="Gene3D" id="2.40.50.140">
    <property type="entry name" value="Nucleic acid-binding proteins"/>
    <property type="match status" value="1"/>
</dbReference>
<dbReference type="HAMAP" id="MF_01595">
    <property type="entry name" value="PNPase"/>
    <property type="match status" value="1"/>
</dbReference>
<dbReference type="InterPro" id="IPR001247">
    <property type="entry name" value="ExoRNase_PH_dom1"/>
</dbReference>
<dbReference type="InterPro" id="IPR015847">
    <property type="entry name" value="ExoRNase_PH_dom2"/>
</dbReference>
<dbReference type="InterPro" id="IPR036345">
    <property type="entry name" value="ExoRNase_PH_dom2_sf"/>
</dbReference>
<dbReference type="InterPro" id="IPR004087">
    <property type="entry name" value="KH_dom"/>
</dbReference>
<dbReference type="InterPro" id="IPR004088">
    <property type="entry name" value="KH_dom_type_1"/>
</dbReference>
<dbReference type="InterPro" id="IPR036612">
    <property type="entry name" value="KH_dom_type_1_sf"/>
</dbReference>
<dbReference type="InterPro" id="IPR012340">
    <property type="entry name" value="NA-bd_OB-fold"/>
</dbReference>
<dbReference type="InterPro" id="IPR012162">
    <property type="entry name" value="PNPase"/>
</dbReference>
<dbReference type="InterPro" id="IPR027408">
    <property type="entry name" value="PNPase/RNase_PH_dom_sf"/>
</dbReference>
<dbReference type="InterPro" id="IPR015848">
    <property type="entry name" value="PNPase_PH_RNA-bd_bac/org-type"/>
</dbReference>
<dbReference type="InterPro" id="IPR036456">
    <property type="entry name" value="PNPase_PH_RNA-bd_sf"/>
</dbReference>
<dbReference type="InterPro" id="IPR020568">
    <property type="entry name" value="Ribosomal_Su5_D2-typ_SF"/>
</dbReference>
<dbReference type="InterPro" id="IPR003029">
    <property type="entry name" value="S1_domain"/>
</dbReference>
<dbReference type="NCBIfam" id="TIGR03591">
    <property type="entry name" value="polynuc_phos"/>
    <property type="match status" value="1"/>
</dbReference>
<dbReference type="NCBIfam" id="NF008805">
    <property type="entry name" value="PRK11824.1"/>
    <property type="match status" value="1"/>
</dbReference>
<dbReference type="PANTHER" id="PTHR11252">
    <property type="entry name" value="POLYRIBONUCLEOTIDE NUCLEOTIDYLTRANSFERASE"/>
    <property type="match status" value="1"/>
</dbReference>
<dbReference type="PANTHER" id="PTHR11252:SF0">
    <property type="entry name" value="POLYRIBONUCLEOTIDE NUCLEOTIDYLTRANSFERASE 1, MITOCHONDRIAL"/>
    <property type="match status" value="1"/>
</dbReference>
<dbReference type="Pfam" id="PF00013">
    <property type="entry name" value="KH_1"/>
    <property type="match status" value="1"/>
</dbReference>
<dbReference type="Pfam" id="PF03726">
    <property type="entry name" value="PNPase"/>
    <property type="match status" value="1"/>
</dbReference>
<dbReference type="Pfam" id="PF01138">
    <property type="entry name" value="RNase_PH"/>
    <property type="match status" value="2"/>
</dbReference>
<dbReference type="Pfam" id="PF03725">
    <property type="entry name" value="RNase_PH_C"/>
    <property type="match status" value="1"/>
</dbReference>
<dbReference type="Pfam" id="PF00575">
    <property type="entry name" value="S1"/>
    <property type="match status" value="1"/>
</dbReference>
<dbReference type="PIRSF" id="PIRSF005499">
    <property type="entry name" value="PNPase"/>
    <property type="match status" value="1"/>
</dbReference>
<dbReference type="SMART" id="SM00322">
    <property type="entry name" value="KH"/>
    <property type="match status" value="1"/>
</dbReference>
<dbReference type="SMART" id="SM00316">
    <property type="entry name" value="S1"/>
    <property type="match status" value="1"/>
</dbReference>
<dbReference type="SUPFAM" id="SSF54791">
    <property type="entry name" value="Eukaryotic type KH-domain (KH-domain type I)"/>
    <property type="match status" value="1"/>
</dbReference>
<dbReference type="SUPFAM" id="SSF50249">
    <property type="entry name" value="Nucleic acid-binding proteins"/>
    <property type="match status" value="1"/>
</dbReference>
<dbReference type="SUPFAM" id="SSF46915">
    <property type="entry name" value="Polynucleotide phosphorylase/guanosine pentaphosphate synthase (PNPase/GPSI), domain 3"/>
    <property type="match status" value="1"/>
</dbReference>
<dbReference type="SUPFAM" id="SSF55666">
    <property type="entry name" value="Ribonuclease PH domain 2-like"/>
    <property type="match status" value="2"/>
</dbReference>
<dbReference type="SUPFAM" id="SSF54211">
    <property type="entry name" value="Ribosomal protein S5 domain 2-like"/>
    <property type="match status" value="2"/>
</dbReference>
<dbReference type="PROSITE" id="PS50084">
    <property type="entry name" value="KH_TYPE_1"/>
    <property type="match status" value="1"/>
</dbReference>
<dbReference type="PROSITE" id="PS50126">
    <property type="entry name" value="S1"/>
    <property type="match status" value="1"/>
</dbReference>
<protein>
    <recommendedName>
        <fullName evidence="1">Polyribonucleotide nucleotidyltransferase</fullName>
        <ecNumber evidence="1">2.7.7.8</ecNumber>
    </recommendedName>
    <alternativeName>
        <fullName evidence="1">Polynucleotide phosphorylase</fullName>
        <shortName evidence="1">PNPase</shortName>
    </alternativeName>
</protein>
<accession>B2V4H5</accession>
<feature type="chain" id="PRO_1000192470" description="Polyribonucleotide nucleotidyltransferase">
    <location>
        <begin position="1"/>
        <end position="704"/>
    </location>
</feature>
<feature type="domain" description="KH" evidence="1">
    <location>
        <begin position="552"/>
        <end position="611"/>
    </location>
</feature>
<feature type="domain" description="S1 motif" evidence="1">
    <location>
        <begin position="621"/>
        <end position="689"/>
    </location>
</feature>
<feature type="binding site" evidence="1">
    <location>
        <position position="485"/>
    </location>
    <ligand>
        <name>Mg(2+)</name>
        <dbReference type="ChEBI" id="CHEBI:18420"/>
    </ligand>
</feature>
<feature type="binding site" evidence="1">
    <location>
        <position position="491"/>
    </location>
    <ligand>
        <name>Mg(2+)</name>
        <dbReference type="ChEBI" id="CHEBI:18420"/>
    </ligand>
</feature>